<dbReference type="EC" id="4.2.1.33" evidence="1"/>
<dbReference type="EMBL" id="CP001127">
    <property type="protein sequence ID" value="ACF92588.1"/>
    <property type="molecule type" value="Genomic_DNA"/>
</dbReference>
<dbReference type="RefSeq" id="WP_001140632.1">
    <property type="nucleotide sequence ID" value="NC_011094.1"/>
</dbReference>
<dbReference type="SMR" id="B4TWV9"/>
<dbReference type="KEGG" id="sew:SeSA_A0127"/>
<dbReference type="HOGENOM" id="CLU_006714_3_4_6"/>
<dbReference type="UniPathway" id="UPA00048">
    <property type="reaction ID" value="UER00071"/>
</dbReference>
<dbReference type="Proteomes" id="UP000001865">
    <property type="component" value="Chromosome"/>
</dbReference>
<dbReference type="GO" id="GO:0003861">
    <property type="term" value="F:3-isopropylmalate dehydratase activity"/>
    <property type="evidence" value="ECO:0007669"/>
    <property type="project" value="UniProtKB-UniRule"/>
</dbReference>
<dbReference type="GO" id="GO:0051539">
    <property type="term" value="F:4 iron, 4 sulfur cluster binding"/>
    <property type="evidence" value="ECO:0007669"/>
    <property type="project" value="UniProtKB-KW"/>
</dbReference>
<dbReference type="GO" id="GO:0046872">
    <property type="term" value="F:metal ion binding"/>
    <property type="evidence" value="ECO:0007669"/>
    <property type="project" value="UniProtKB-KW"/>
</dbReference>
<dbReference type="GO" id="GO:0009098">
    <property type="term" value="P:L-leucine biosynthetic process"/>
    <property type="evidence" value="ECO:0007669"/>
    <property type="project" value="UniProtKB-UniRule"/>
</dbReference>
<dbReference type="CDD" id="cd01583">
    <property type="entry name" value="IPMI"/>
    <property type="match status" value="1"/>
</dbReference>
<dbReference type="FunFam" id="3.30.499.10:FF:000006">
    <property type="entry name" value="3-isopropylmalate dehydratase large subunit"/>
    <property type="match status" value="1"/>
</dbReference>
<dbReference type="FunFam" id="3.30.499.10:FF:000007">
    <property type="entry name" value="3-isopropylmalate dehydratase large subunit"/>
    <property type="match status" value="1"/>
</dbReference>
<dbReference type="Gene3D" id="3.30.499.10">
    <property type="entry name" value="Aconitase, domain 3"/>
    <property type="match status" value="2"/>
</dbReference>
<dbReference type="HAMAP" id="MF_01026">
    <property type="entry name" value="LeuC_type1"/>
    <property type="match status" value="1"/>
</dbReference>
<dbReference type="InterPro" id="IPR004430">
    <property type="entry name" value="3-IsopropMal_deHydase_lsu"/>
</dbReference>
<dbReference type="InterPro" id="IPR015931">
    <property type="entry name" value="Acnase/IPM_dHydase_lsu_aba_1/3"/>
</dbReference>
<dbReference type="InterPro" id="IPR001030">
    <property type="entry name" value="Acoase/IPM_deHydtase_lsu_aba"/>
</dbReference>
<dbReference type="InterPro" id="IPR018136">
    <property type="entry name" value="Aconitase_4Fe-4S_BS"/>
</dbReference>
<dbReference type="InterPro" id="IPR036008">
    <property type="entry name" value="Aconitase_4Fe-4S_dom"/>
</dbReference>
<dbReference type="InterPro" id="IPR050067">
    <property type="entry name" value="IPM_dehydratase_rel_enz"/>
</dbReference>
<dbReference type="InterPro" id="IPR033941">
    <property type="entry name" value="IPMI_cat"/>
</dbReference>
<dbReference type="NCBIfam" id="TIGR00170">
    <property type="entry name" value="leuC"/>
    <property type="match status" value="1"/>
</dbReference>
<dbReference type="NCBIfam" id="NF004016">
    <property type="entry name" value="PRK05478.1"/>
    <property type="match status" value="1"/>
</dbReference>
<dbReference type="NCBIfam" id="NF009116">
    <property type="entry name" value="PRK12466.1"/>
    <property type="match status" value="1"/>
</dbReference>
<dbReference type="PANTHER" id="PTHR43822:SF9">
    <property type="entry name" value="3-ISOPROPYLMALATE DEHYDRATASE"/>
    <property type="match status" value="1"/>
</dbReference>
<dbReference type="PANTHER" id="PTHR43822">
    <property type="entry name" value="HOMOACONITASE, MITOCHONDRIAL-RELATED"/>
    <property type="match status" value="1"/>
</dbReference>
<dbReference type="Pfam" id="PF00330">
    <property type="entry name" value="Aconitase"/>
    <property type="match status" value="1"/>
</dbReference>
<dbReference type="PRINTS" id="PR00415">
    <property type="entry name" value="ACONITASE"/>
</dbReference>
<dbReference type="SUPFAM" id="SSF53732">
    <property type="entry name" value="Aconitase iron-sulfur domain"/>
    <property type="match status" value="1"/>
</dbReference>
<dbReference type="PROSITE" id="PS00450">
    <property type="entry name" value="ACONITASE_1"/>
    <property type="match status" value="1"/>
</dbReference>
<dbReference type="PROSITE" id="PS01244">
    <property type="entry name" value="ACONITASE_2"/>
    <property type="match status" value="1"/>
</dbReference>
<feature type="chain" id="PRO_1000135713" description="3-isopropylmalate dehydratase large subunit">
    <location>
        <begin position="1"/>
        <end position="466"/>
    </location>
</feature>
<feature type="binding site" evidence="1">
    <location>
        <position position="347"/>
    </location>
    <ligand>
        <name>[4Fe-4S] cluster</name>
        <dbReference type="ChEBI" id="CHEBI:49883"/>
    </ligand>
</feature>
<feature type="binding site" evidence="1">
    <location>
        <position position="407"/>
    </location>
    <ligand>
        <name>[4Fe-4S] cluster</name>
        <dbReference type="ChEBI" id="CHEBI:49883"/>
    </ligand>
</feature>
<feature type="binding site" evidence="1">
    <location>
        <position position="410"/>
    </location>
    <ligand>
        <name>[4Fe-4S] cluster</name>
        <dbReference type="ChEBI" id="CHEBI:49883"/>
    </ligand>
</feature>
<gene>
    <name evidence="1" type="primary">leuC</name>
    <name type="ordered locus">SeSA_A0127</name>
</gene>
<organism>
    <name type="scientific">Salmonella schwarzengrund (strain CVM19633)</name>
    <dbReference type="NCBI Taxonomy" id="439843"/>
    <lineage>
        <taxon>Bacteria</taxon>
        <taxon>Pseudomonadati</taxon>
        <taxon>Pseudomonadota</taxon>
        <taxon>Gammaproteobacteria</taxon>
        <taxon>Enterobacterales</taxon>
        <taxon>Enterobacteriaceae</taxon>
        <taxon>Salmonella</taxon>
    </lineage>
</organism>
<name>LEUC_SALSV</name>
<accession>B4TWV9</accession>
<sequence length="466" mass="49816">MAKTLYEKLFDAHVVFEAPNETPLLYIDRHLVHEVTSPQAFDGLRAHHRPVRQPGKTFATMDHNVSTQTKDINASGEMARIQMQELIKNCNEFGVELYDLNHPYQGIVHVMGPEQGVTLPGMTIVCGDSHTATHGAFGALAFGIGTSEVEHVLATQTLKQGRAKTMKIEVTGNAAPGITAKDIVLAIIGKTGSAGGTGHVVEFCGDAIRALSMEGRMTLCNMAIEMGAKAGLVAPDETTFNYVKGRLHAPKGRDFDEAVEYWKTLKTDDGATFDTVVTLRAEEIAPQVTWGTNPGQVISVTDIIPDPASFSDPVERASAEKALAYMGLQPGVPLTDVAIDKVFIGSCTNSRIEDLRAAAEVAKGRKVAPGVQALVVPGSGPVKAQAEAEGLDKIFIEAGFEWRLPGCSMCLAMNNDRLNPGERCASTSNRNFEGRQGRGGRTHLVSPAMAAAAAVTGHFADIRSIK</sequence>
<keyword id="KW-0004">4Fe-4S</keyword>
<keyword id="KW-0028">Amino-acid biosynthesis</keyword>
<keyword id="KW-0100">Branched-chain amino acid biosynthesis</keyword>
<keyword id="KW-0408">Iron</keyword>
<keyword id="KW-0411">Iron-sulfur</keyword>
<keyword id="KW-0432">Leucine biosynthesis</keyword>
<keyword id="KW-0456">Lyase</keyword>
<keyword id="KW-0479">Metal-binding</keyword>
<reference key="1">
    <citation type="journal article" date="2011" name="J. Bacteriol.">
        <title>Comparative genomics of 28 Salmonella enterica isolates: evidence for CRISPR-mediated adaptive sublineage evolution.</title>
        <authorList>
            <person name="Fricke W.F."/>
            <person name="Mammel M.K."/>
            <person name="McDermott P.F."/>
            <person name="Tartera C."/>
            <person name="White D.G."/>
            <person name="Leclerc J.E."/>
            <person name="Ravel J."/>
            <person name="Cebula T.A."/>
        </authorList>
    </citation>
    <scope>NUCLEOTIDE SEQUENCE [LARGE SCALE GENOMIC DNA]</scope>
    <source>
        <strain>CVM19633</strain>
    </source>
</reference>
<protein>
    <recommendedName>
        <fullName evidence="1">3-isopropylmalate dehydratase large subunit</fullName>
        <ecNumber evidence="1">4.2.1.33</ecNumber>
    </recommendedName>
    <alternativeName>
        <fullName evidence="1">Alpha-IPM isomerase</fullName>
        <shortName evidence="1">IPMI</shortName>
    </alternativeName>
    <alternativeName>
        <fullName evidence="1">Isopropylmalate isomerase</fullName>
    </alternativeName>
</protein>
<proteinExistence type="inferred from homology"/>
<evidence type="ECO:0000255" key="1">
    <source>
        <dbReference type="HAMAP-Rule" id="MF_01026"/>
    </source>
</evidence>
<comment type="function">
    <text evidence="1">Catalyzes the isomerization between 2-isopropylmalate and 3-isopropylmalate, via the formation of 2-isopropylmaleate.</text>
</comment>
<comment type="catalytic activity">
    <reaction evidence="1">
        <text>(2R,3S)-3-isopropylmalate = (2S)-2-isopropylmalate</text>
        <dbReference type="Rhea" id="RHEA:32287"/>
        <dbReference type="ChEBI" id="CHEBI:1178"/>
        <dbReference type="ChEBI" id="CHEBI:35121"/>
        <dbReference type="EC" id="4.2.1.33"/>
    </reaction>
</comment>
<comment type="cofactor">
    <cofactor evidence="1">
        <name>[4Fe-4S] cluster</name>
        <dbReference type="ChEBI" id="CHEBI:49883"/>
    </cofactor>
    <text evidence="1">Binds 1 [4Fe-4S] cluster per subunit.</text>
</comment>
<comment type="pathway">
    <text evidence="1">Amino-acid biosynthesis; L-leucine biosynthesis; L-leucine from 3-methyl-2-oxobutanoate: step 2/4.</text>
</comment>
<comment type="subunit">
    <text evidence="1">Heterodimer of LeuC and LeuD.</text>
</comment>
<comment type="similarity">
    <text evidence="1">Belongs to the aconitase/IPM isomerase family. LeuC type 1 subfamily.</text>
</comment>